<gene>
    <name evidence="1" type="primary">rpmC</name>
    <name evidence="1" type="synonym">rpl29</name>
    <name type="ordered locus">SYNW2075</name>
</gene>
<name>RL29_PARMW</name>
<comment type="similarity">
    <text evidence="1">Belongs to the universal ribosomal protein uL29 family.</text>
</comment>
<feature type="chain" id="PRO_0000130479" description="Large ribosomal subunit protein uL29">
    <location>
        <begin position="1"/>
        <end position="69"/>
    </location>
</feature>
<protein>
    <recommendedName>
        <fullName evidence="1">Large ribosomal subunit protein uL29</fullName>
    </recommendedName>
    <alternativeName>
        <fullName evidence="2">50S ribosomal protein L29</fullName>
    </alternativeName>
</protein>
<sequence>MARPNAAEVRQLSDTDITEQINGLRRELFQLRFQQATRQLANTHRFKEVRIKLAQLMTVQSERQRSAAS</sequence>
<evidence type="ECO:0000255" key="1">
    <source>
        <dbReference type="HAMAP-Rule" id="MF_00374"/>
    </source>
</evidence>
<evidence type="ECO:0000305" key="2"/>
<dbReference type="EMBL" id="BX569694">
    <property type="protein sequence ID" value="CAE08590.1"/>
    <property type="molecule type" value="Genomic_DNA"/>
</dbReference>
<dbReference type="RefSeq" id="WP_011128933.1">
    <property type="nucleotide sequence ID" value="NC_005070.1"/>
</dbReference>
<dbReference type="SMR" id="Q7U4J2"/>
<dbReference type="STRING" id="84588.SYNW2075"/>
<dbReference type="KEGG" id="syw:SYNW2075"/>
<dbReference type="eggNOG" id="COG0255">
    <property type="taxonomic scope" value="Bacteria"/>
</dbReference>
<dbReference type="HOGENOM" id="CLU_158491_0_1_3"/>
<dbReference type="Proteomes" id="UP000001422">
    <property type="component" value="Chromosome"/>
</dbReference>
<dbReference type="GO" id="GO:0022625">
    <property type="term" value="C:cytosolic large ribosomal subunit"/>
    <property type="evidence" value="ECO:0007669"/>
    <property type="project" value="TreeGrafter"/>
</dbReference>
<dbReference type="GO" id="GO:0003735">
    <property type="term" value="F:structural constituent of ribosome"/>
    <property type="evidence" value="ECO:0007669"/>
    <property type="project" value="InterPro"/>
</dbReference>
<dbReference type="GO" id="GO:0006412">
    <property type="term" value="P:translation"/>
    <property type="evidence" value="ECO:0007669"/>
    <property type="project" value="UniProtKB-UniRule"/>
</dbReference>
<dbReference type="CDD" id="cd00427">
    <property type="entry name" value="Ribosomal_L29_HIP"/>
    <property type="match status" value="1"/>
</dbReference>
<dbReference type="FunFam" id="1.10.287.310:FF:000001">
    <property type="entry name" value="50S ribosomal protein L29"/>
    <property type="match status" value="1"/>
</dbReference>
<dbReference type="Gene3D" id="1.10.287.310">
    <property type="match status" value="1"/>
</dbReference>
<dbReference type="HAMAP" id="MF_00374">
    <property type="entry name" value="Ribosomal_uL29"/>
    <property type="match status" value="1"/>
</dbReference>
<dbReference type="InterPro" id="IPR050063">
    <property type="entry name" value="Ribosomal_protein_uL29"/>
</dbReference>
<dbReference type="InterPro" id="IPR001854">
    <property type="entry name" value="Ribosomal_uL29"/>
</dbReference>
<dbReference type="InterPro" id="IPR036049">
    <property type="entry name" value="Ribosomal_uL29_sf"/>
</dbReference>
<dbReference type="NCBIfam" id="TIGR00012">
    <property type="entry name" value="L29"/>
    <property type="match status" value="1"/>
</dbReference>
<dbReference type="PANTHER" id="PTHR10916">
    <property type="entry name" value="60S RIBOSOMAL PROTEIN L35/50S RIBOSOMAL PROTEIN L29"/>
    <property type="match status" value="1"/>
</dbReference>
<dbReference type="PANTHER" id="PTHR10916:SF0">
    <property type="entry name" value="LARGE RIBOSOMAL SUBUNIT PROTEIN UL29C"/>
    <property type="match status" value="1"/>
</dbReference>
<dbReference type="Pfam" id="PF00831">
    <property type="entry name" value="Ribosomal_L29"/>
    <property type="match status" value="1"/>
</dbReference>
<dbReference type="SUPFAM" id="SSF46561">
    <property type="entry name" value="Ribosomal protein L29 (L29p)"/>
    <property type="match status" value="1"/>
</dbReference>
<organism>
    <name type="scientific">Parasynechococcus marenigrum (strain WH8102)</name>
    <dbReference type="NCBI Taxonomy" id="84588"/>
    <lineage>
        <taxon>Bacteria</taxon>
        <taxon>Bacillati</taxon>
        <taxon>Cyanobacteriota</taxon>
        <taxon>Cyanophyceae</taxon>
        <taxon>Synechococcales</taxon>
        <taxon>Prochlorococcaceae</taxon>
        <taxon>Parasynechococcus</taxon>
        <taxon>Parasynechococcus marenigrum</taxon>
    </lineage>
</organism>
<proteinExistence type="inferred from homology"/>
<accession>Q7U4J2</accession>
<keyword id="KW-0687">Ribonucleoprotein</keyword>
<keyword id="KW-0689">Ribosomal protein</keyword>
<reference key="1">
    <citation type="journal article" date="2003" name="Nature">
        <title>The genome of a motile marine Synechococcus.</title>
        <authorList>
            <person name="Palenik B."/>
            <person name="Brahamsha B."/>
            <person name="Larimer F.W."/>
            <person name="Land M.L."/>
            <person name="Hauser L."/>
            <person name="Chain P."/>
            <person name="Lamerdin J.E."/>
            <person name="Regala W."/>
            <person name="Allen E.E."/>
            <person name="McCarren J."/>
            <person name="Paulsen I.T."/>
            <person name="Dufresne A."/>
            <person name="Partensky F."/>
            <person name="Webb E.A."/>
            <person name="Waterbury J."/>
        </authorList>
    </citation>
    <scope>NUCLEOTIDE SEQUENCE [LARGE SCALE GENOMIC DNA]</scope>
    <source>
        <strain>WH8102</strain>
    </source>
</reference>